<reference key="1">
    <citation type="submission" date="2003-10" db="EMBL/GenBank/DDBJ databases">
        <title>The complete genome sequence of the alkaliphilic Bacillus clausii KSM-K16.</title>
        <authorList>
            <person name="Takaki Y."/>
            <person name="Kageyama Y."/>
            <person name="Shimamura S."/>
            <person name="Suzuki H."/>
            <person name="Nishi S."/>
            <person name="Hatada Y."/>
            <person name="Kawai S."/>
            <person name="Ito S."/>
            <person name="Horikoshi K."/>
        </authorList>
    </citation>
    <scope>NUCLEOTIDE SEQUENCE [LARGE SCALE GENOMIC DNA]</scope>
    <source>
        <strain>KSM-K16</strain>
    </source>
</reference>
<accession>Q5WAE0</accession>
<evidence type="ECO:0000255" key="1">
    <source>
        <dbReference type="HAMAP-Rule" id="MF_01161"/>
    </source>
</evidence>
<sequence>MEARVEQFIENNRLFGMETNVLVAVSGGPDSMALLAIMANLREKWKLNLFGVHVNHRLRGEESNKDAELVQSFSARLGVPCNVKDVDVAAFKAEHHVGTQQAARALRYQVFQGEMERVHATVLLTAHHGDDEVETAFMKLTRGTTPLTKLGIAATRPFANGVLARPLLEETKRSIVAYCHEKAIPYRIDQSNFSDAYTRNRFRMNMAPYLVEENPHIHKHIGRFDRWQEEDNHYLMEQAKAHLDQILTKKSEKSIELEIQALCLAPFPLQRRMIHLILNYLHLNVYGVNDMRVFPDAIEQIQAFLQTSAPSAQLDLPGRVQVKRSYGTCLFTTAPFIETKAYCHLLSIPGKVDTPLGVIRADTREELLELEHTDAVSFQVSQVAFPLYIRNRKPGDKLSPSGMSGSKKVNRLFIDRKVDRAKRDAWPLLVDANDSILWVPSLQTSRILTRSANVQGELLHVTFSQHKWP</sequence>
<organism>
    <name type="scientific">Shouchella clausii (strain KSM-K16)</name>
    <name type="common">Alkalihalobacillus clausii</name>
    <dbReference type="NCBI Taxonomy" id="66692"/>
    <lineage>
        <taxon>Bacteria</taxon>
        <taxon>Bacillati</taxon>
        <taxon>Bacillota</taxon>
        <taxon>Bacilli</taxon>
        <taxon>Bacillales</taxon>
        <taxon>Bacillaceae</taxon>
        <taxon>Shouchella</taxon>
    </lineage>
</organism>
<proteinExistence type="inferred from homology"/>
<comment type="function">
    <text evidence="1">Ligates lysine onto the cytidine present at position 34 of the AUA codon-specific tRNA(Ile) that contains the anticodon CAU, in an ATP-dependent manner. Cytidine is converted to lysidine, thus changing the amino acid specificity of the tRNA from methionine to isoleucine.</text>
</comment>
<comment type="catalytic activity">
    <reaction evidence="1">
        <text>cytidine(34) in tRNA(Ile2) + L-lysine + ATP = lysidine(34) in tRNA(Ile2) + AMP + diphosphate + H(+)</text>
        <dbReference type="Rhea" id="RHEA:43744"/>
        <dbReference type="Rhea" id="RHEA-COMP:10625"/>
        <dbReference type="Rhea" id="RHEA-COMP:10670"/>
        <dbReference type="ChEBI" id="CHEBI:15378"/>
        <dbReference type="ChEBI" id="CHEBI:30616"/>
        <dbReference type="ChEBI" id="CHEBI:32551"/>
        <dbReference type="ChEBI" id="CHEBI:33019"/>
        <dbReference type="ChEBI" id="CHEBI:82748"/>
        <dbReference type="ChEBI" id="CHEBI:83665"/>
        <dbReference type="ChEBI" id="CHEBI:456215"/>
        <dbReference type="EC" id="6.3.4.19"/>
    </reaction>
</comment>
<comment type="subcellular location">
    <subcellularLocation>
        <location evidence="1">Cytoplasm</location>
    </subcellularLocation>
</comment>
<comment type="domain">
    <text>The N-terminal region contains the highly conserved SGGXDS motif, predicted to be a P-loop motif involved in ATP binding.</text>
</comment>
<comment type="similarity">
    <text evidence="1">Belongs to the tRNA(Ile)-lysidine synthase family.</text>
</comment>
<dbReference type="EC" id="6.3.4.19" evidence="1"/>
<dbReference type="EMBL" id="AP006627">
    <property type="protein sequence ID" value="BAD62647.1"/>
    <property type="molecule type" value="Genomic_DNA"/>
</dbReference>
<dbReference type="RefSeq" id="WP_011244968.1">
    <property type="nucleotide sequence ID" value="NC_006582.1"/>
</dbReference>
<dbReference type="SMR" id="Q5WAE0"/>
<dbReference type="STRING" id="66692.ABC0104"/>
<dbReference type="KEGG" id="bcl:ABC0104"/>
<dbReference type="eggNOG" id="COG0037">
    <property type="taxonomic scope" value="Bacteria"/>
</dbReference>
<dbReference type="HOGENOM" id="CLU_018869_0_1_9"/>
<dbReference type="OrthoDB" id="9807403at2"/>
<dbReference type="Proteomes" id="UP000001168">
    <property type="component" value="Chromosome"/>
</dbReference>
<dbReference type="GO" id="GO:0005737">
    <property type="term" value="C:cytoplasm"/>
    <property type="evidence" value="ECO:0007669"/>
    <property type="project" value="UniProtKB-SubCell"/>
</dbReference>
<dbReference type="GO" id="GO:0005524">
    <property type="term" value="F:ATP binding"/>
    <property type="evidence" value="ECO:0007669"/>
    <property type="project" value="UniProtKB-UniRule"/>
</dbReference>
<dbReference type="GO" id="GO:0032267">
    <property type="term" value="F:tRNA(Ile)-lysidine synthase activity"/>
    <property type="evidence" value="ECO:0007669"/>
    <property type="project" value="UniProtKB-EC"/>
</dbReference>
<dbReference type="GO" id="GO:0006400">
    <property type="term" value="P:tRNA modification"/>
    <property type="evidence" value="ECO:0007669"/>
    <property type="project" value="UniProtKB-UniRule"/>
</dbReference>
<dbReference type="CDD" id="cd01992">
    <property type="entry name" value="TilS_N"/>
    <property type="match status" value="1"/>
</dbReference>
<dbReference type="Gene3D" id="3.30.465.60">
    <property type="match status" value="1"/>
</dbReference>
<dbReference type="Gene3D" id="3.40.50.620">
    <property type="entry name" value="HUPs"/>
    <property type="match status" value="1"/>
</dbReference>
<dbReference type="HAMAP" id="MF_01161">
    <property type="entry name" value="tRNA_Ile_lys_synt"/>
    <property type="match status" value="1"/>
</dbReference>
<dbReference type="InterPro" id="IPR012796">
    <property type="entry name" value="Lysidine-tRNA-synth_C"/>
</dbReference>
<dbReference type="InterPro" id="IPR014729">
    <property type="entry name" value="Rossmann-like_a/b/a_fold"/>
</dbReference>
<dbReference type="InterPro" id="IPR011063">
    <property type="entry name" value="TilS/TtcA_N"/>
</dbReference>
<dbReference type="InterPro" id="IPR012094">
    <property type="entry name" value="tRNA_Ile_lys_synt"/>
</dbReference>
<dbReference type="InterPro" id="IPR012795">
    <property type="entry name" value="tRNA_Ile_lys_synt_N"/>
</dbReference>
<dbReference type="NCBIfam" id="TIGR02433">
    <property type="entry name" value="lysidine_TilS_C"/>
    <property type="match status" value="1"/>
</dbReference>
<dbReference type="NCBIfam" id="TIGR02432">
    <property type="entry name" value="lysidine_TilS_N"/>
    <property type="match status" value="1"/>
</dbReference>
<dbReference type="PANTHER" id="PTHR43033">
    <property type="entry name" value="TRNA(ILE)-LYSIDINE SYNTHASE-RELATED"/>
    <property type="match status" value="1"/>
</dbReference>
<dbReference type="PANTHER" id="PTHR43033:SF1">
    <property type="entry name" value="TRNA(ILE)-LYSIDINE SYNTHASE-RELATED"/>
    <property type="match status" value="1"/>
</dbReference>
<dbReference type="Pfam" id="PF01171">
    <property type="entry name" value="ATP_bind_3"/>
    <property type="match status" value="1"/>
</dbReference>
<dbReference type="Pfam" id="PF11734">
    <property type="entry name" value="TilS_C"/>
    <property type="match status" value="1"/>
</dbReference>
<dbReference type="SMART" id="SM00977">
    <property type="entry name" value="TilS_C"/>
    <property type="match status" value="1"/>
</dbReference>
<dbReference type="SUPFAM" id="SSF52402">
    <property type="entry name" value="Adenine nucleotide alpha hydrolases-like"/>
    <property type="match status" value="1"/>
</dbReference>
<dbReference type="SUPFAM" id="SSF82829">
    <property type="entry name" value="MesJ substrate recognition domain-like"/>
    <property type="match status" value="1"/>
</dbReference>
<dbReference type="SUPFAM" id="SSF56037">
    <property type="entry name" value="PheT/TilS domain"/>
    <property type="match status" value="1"/>
</dbReference>
<feature type="chain" id="PRO_0000181649" description="tRNA(Ile)-lysidine synthase">
    <location>
        <begin position="1"/>
        <end position="469"/>
    </location>
</feature>
<feature type="binding site" evidence="1">
    <location>
        <begin position="26"/>
        <end position="31"/>
    </location>
    <ligand>
        <name>ATP</name>
        <dbReference type="ChEBI" id="CHEBI:30616"/>
    </ligand>
</feature>
<protein>
    <recommendedName>
        <fullName evidence="1">tRNA(Ile)-lysidine synthase</fullName>
        <ecNumber evidence="1">6.3.4.19</ecNumber>
    </recommendedName>
    <alternativeName>
        <fullName evidence="1">tRNA(Ile)-2-lysyl-cytidine synthase</fullName>
    </alternativeName>
    <alternativeName>
        <fullName evidence="1">tRNA(Ile)-lysidine synthetase</fullName>
    </alternativeName>
</protein>
<gene>
    <name evidence="1" type="primary">tilS</name>
    <name type="ordered locus">ABC0104</name>
</gene>
<keyword id="KW-0067">ATP-binding</keyword>
<keyword id="KW-0963">Cytoplasm</keyword>
<keyword id="KW-0436">Ligase</keyword>
<keyword id="KW-0547">Nucleotide-binding</keyword>
<keyword id="KW-1185">Reference proteome</keyword>
<keyword id="KW-0819">tRNA processing</keyword>
<name>TILS_SHOC1</name>